<protein>
    <recommendedName>
        <fullName evidence="1">Trigger factor</fullName>
        <shortName evidence="1">TF</shortName>
        <ecNumber evidence="1">5.2.1.8</ecNumber>
    </recommendedName>
    <alternativeName>
        <fullName evidence="1">PPIase</fullName>
    </alternativeName>
</protein>
<evidence type="ECO:0000255" key="1">
    <source>
        <dbReference type="HAMAP-Rule" id="MF_00303"/>
    </source>
</evidence>
<comment type="function">
    <text evidence="1">Involved in protein export. Acts as a chaperone by maintaining the newly synthesized protein in an open conformation. Functions as a peptidyl-prolyl cis-trans isomerase.</text>
</comment>
<comment type="catalytic activity">
    <reaction evidence="1">
        <text>[protein]-peptidylproline (omega=180) = [protein]-peptidylproline (omega=0)</text>
        <dbReference type="Rhea" id="RHEA:16237"/>
        <dbReference type="Rhea" id="RHEA-COMP:10747"/>
        <dbReference type="Rhea" id="RHEA-COMP:10748"/>
        <dbReference type="ChEBI" id="CHEBI:83833"/>
        <dbReference type="ChEBI" id="CHEBI:83834"/>
        <dbReference type="EC" id="5.2.1.8"/>
    </reaction>
</comment>
<comment type="subcellular location">
    <subcellularLocation>
        <location>Cytoplasm</location>
    </subcellularLocation>
    <text evidence="1">About half TF is bound to the ribosome near the polypeptide exit tunnel while the other half is free in the cytoplasm.</text>
</comment>
<comment type="domain">
    <text evidence="1">Consists of 3 domains; the N-terminus binds the ribosome, the middle domain has PPIase activity, while the C-terminus has intrinsic chaperone activity on its own.</text>
</comment>
<comment type="similarity">
    <text evidence="1">Belongs to the FKBP-type PPIase family. Tig subfamily.</text>
</comment>
<proteinExistence type="inferred from homology"/>
<dbReference type="EC" id="5.2.1.8" evidence="1"/>
<dbReference type="EMBL" id="CP000915">
    <property type="protein sequence ID" value="ACD30676.1"/>
    <property type="molecule type" value="Genomic_DNA"/>
</dbReference>
<dbReference type="SMR" id="B2SG17"/>
<dbReference type="KEGG" id="ftm:FTM_0698"/>
<dbReference type="HOGENOM" id="CLU_033058_2_0_6"/>
<dbReference type="GO" id="GO:0005737">
    <property type="term" value="C:cytoplasm"/>
    <property type="evidence" value="ECO:0007669"/>
    <property type="project" value="UniProtKB-SubCell"/>
</dbReference>
<dbReference type="GO" id="GO:0003755">
    <property type="term" value="F:peptidyl-prolyl cis-trans isomerase activity"/>
    <property type="evidence" value="ECO:0007669"/>
    <property type="project" value="UniProtKB-UniRule"/>
</dbReference>
<dbReference type="GO" id="GO:0044183">
    <property type="term" value="F:protein folding chaperone"/>
    <property type="evidence" value="ECO:0007669"/>
    <property type="project" value="TreeGrafter"/>
</dbReference>
<dbReference type="GO" id="GO:0043022">
    <property type="term" value="F:ribosome binding"/>
    <property type="evidence" value="ECO:0007669"/>
    <property type="project" value="TreeGrafter"/>
</dbReference>
<dbReference type="GO" id="GO:0051083">
    <property type="term" value="P:'de novo' cotranslational protein folding"/>
    <property type="evidence" value="ECO:0007669"/>
    <property type="project" value="TreeGrafter"/>
</dbReference>
<dbReference type="GO" id="GO:0051301">
    <property type="term" value="P:cell division"/>
    <property type="evidence" value="ECO:0007669"/>
    <property type="project" value="UniProtKB-KW"/>
</dbReference>
<dbReference type="GO" id="GO:0061077">
    <property type="term" value="P:chaperone-mediated protein folding"/>
    <property type="evidence" value="ECO:0007669"/>
    <property type="project" value="TreeGrafter"/>
</dbReference>
<dbReference type="GO" id="GO:0015031">
    <property type="term" value="P:protein transport"/>
    <property type="evidence" value="ECO:0007669"/>
    <property type="project" value="UniProtKB-UniRule"/>
</dbReference>
<dbReference type="GO" id="GO:0043335">
    <property type="term" value="P:protein unfolding"/>
    <property type="evidence" value="ECO:0007669"/>
    <property type="project" value="TreeGrafter"/>
</dbReference>
<dbReference type="FunFam" id="3.10.50.40:FF:000001">
    <property type="entry name" value="Trigger factor"/>
    <property type="match status" value="1"/>
</dbReference>
<dbReference type="Gene3D" id="3.10.50.40">
    <property type="match status" value="1"/>
</dbReference>
<dbReference type="Gene3D" id="3.30.70.1050">
    <property type="entry name" value="Trigger factor ribosome-binding domain"/>
    <property type="match status" value="1"/>
</dbReference>
<dbReference type="Gene3D" id="1.10.3120.10">
    <property type="entry name" value="Trigger factor, C-terminal domain"/>
    <property type="match status" value="1"/>
</dbReference>
<dbReference type="HAMAP" id="MF_00303">
    <property type="entry name" value="Trigger_factor_Tig"/>
    <property type="match status" value="1"/>
</dbReference>
<dbReference type="InterPro" id="IPR046357">
    <property type="entry name" value="PPIase_dom_sf"/>
</dbReference>
<dbReference type="InterPro" id="IPR001179">
    <property type="entry name" value="PPIase_FKBP_dom"/>
</dbReference>
<dbReference type="InterPro" id="IPR005215">
    <property type="entry name" value="Trig_fac"/>
</dbReference>
<dbReference type="InterPro" id="IPR008880">
    <property type="entry name" value="Trigger_fac_C"/>
</dbReference>
<dbReference type="InterPro" id="IPR037041">
    <property type="entry name" value="Trigger_fac_C_sf"/>
</dbReference>
<dbReference type="InterPro" id="IPR008881">
    <property type="entry name" value="Trigger_fac_ribosome-bd_bac"/>
</dbReference>
<dbReference type="InterPro" id="IPR036611">
    <property type="entry name" value="Trigger_fac_ribosome-bd_sf"/>
</dbReference>
<dbReference type="InterPro" id="IPR027304">
    <property type="entry name" value="Trigger_fact/SurA_dom_sf"/>
</dbReference>
<dbReference type="NCBIfam" id="TIGR00115">
    <property type="entry name" value="tig"/>
    <property type="match status" value="1"/>
</dbReference>
<dbReference type="PANTHER" id="PTHR30560">
    <property type="entry name" value="TRIGGER FACTOR CHAPERONE AND PEPTIDYL-PROLYL CIS/TRANS ISOMERASE"/>
    <property type="match status" value="1"/>
</dbReference>
<dbReference type="PANTHER" id="PTHR30560:SF3">
    <property type="entry name" value="TRIGGER FACTOR-LIKE PROTEIN TIG, CHLOROPLASTIC"/>
    <property type="match status" value="1"/>
</dbReference>
<dbReference type="Pfam" id="PF00254">
    <property type="entry name" value="FKBP_C"/>
    <property type="match status" value="1"/>
</dbReference>
<dbReference type="Pfam" id="PF05698">
    <property type="entry name" value="Trigger_C"/>
    <property type="match status" value="1"/>
</dbReference>
<dbReference type="Pfam" id="PF05697">
    <property type="entry name" value="Trigger_N"/>
    <property type="match status" value="1"/>
</dbReference>
<dbReference type="PIRSF" id="PIRSF003095">
    <property type="entry name" value="Trigger_factor"/>
    <property type="match status" value="1"/>
</dbReference>
<dbReference type="SUPFAM" id="SSF54534">
    <property type="entry name" value="FKBP-like"/>
    <property type="match status" value="1"/>
</dbReference>
<dbReference type="SUPFAM" id="SSF109998">
    <property type="entry name" value="Triger factor/SurA peptide-binding domain-like"/>
    <property type="match status" value="1"/>
</dbReference>
<dbReference type="SUPFAM" id="SSF102735">
    <property type="entry name" value="Trigger factor ribosome-binding domain"/>
    <property type="match status" value="1"/>
</dbReference>
<dbReference type="PROSITE" id="PS50059">
    <property type="entry name" value="FKBP_PPIASE"/>
    <property type="match status" value="1"/>
</dbReference>
<keyword id="KW-0131">Cell cycle</keyword>
<keyword id="KW-0132">Cell division</keyword>
<keyword id="KW-0143">Chaperone</keyword>
<keyword id="KW-0963">Cytoplasm</keyword>
<keyword id="KW-0413">Isomerase</keyword>
<keyword id="KW-0697">Rotamase</keyword>
<gene>
    <name evidence="1" type="primary">tig</name>
    <name type="ordered locus">FTM_0698</name>
</gene>
<reference key="1">
    <citation type="journal article" date="2009" name="PLoS Pathog.">
        <title>Molecular evolutionary consequences of niche restriction in Francisella tularensis, a facultative intracellular pathogen.</title>
        <authorList>
            <person name="Larsson P."/>
            <person name="Elfsmark D."/>
            <person name="Svensson K."/>
            <person name="Wikstroem P."/>
            <person name="Forsman M."/>
            <person name="Brettin T."/>
            <person name="Keim P."/>
            <person name="Johansson A."/>
        </authorList>
    </citation>
    <scope>NUCLEOTIDE SEQUENCE [LARGE SCALE GENOMIC DNA]</scope>
    <source>
        <strain>FSC147</strain>
    </source>
</reference>
<name>TIG_FRATM</name>
<accession>B2SG17</accession>
<feature type="chain" id="PRO_1000115537" description="Trigger factor">
    <location>
        <begin position="1"/>
        <end position="438"/>
    </location>
</feature>
<feature type="domain" description="PPIase FKBP-type" evidence="1">
    <location>
        <begin position="160"/>
        <end position="245"/>
    </location>
</feature>
<organism>
    <name type="scientific">Francisella tularensis subsp. mediasiatica (strain FSC147)</name>
    <dbReference type="NCBI Taxonomy" id="441952"/>
    <lineage>
        <taxon>Bacteria</taxon>
        <taxon>Pseudomonadati</taxon>
        <taxon>Pseudomonadota</taxon>
        <taxon>Gammaproteobacteria</taxon>
        <taxon>Thiotrichales</taxon>
        <taxon>Francisellaceae</taxon>
        <taxon>Francisella</taxon>
    </lineage>
</organism>
<sequence>MQVTVEKKEGIHCSLLIEVPANEIDSVVSKEINRTAKTIKMDGFRPGKVPAGMVKKKYGEQIRMEVISDLIPQKYSKAIQDEKLAVAGIEVELKENKEGQPLKFVANLELFPEFEVTGFEKIEVQKPVVELTDKEVKQMIENLRKQFATFSEVDKVVEKDDKVTIDFVGKKDGEAFEGGTANDIDVIIGSGQMIPGFEDGIIGMKKGEQKTITVTFPQDYQNKDLAEAETTFDITVKKIQQAELPEVNDEFVKKFGVKGGVDTFENEIKENMQRELKFILQRKVKDQVFKGLREIAEFETPKSLIKREIDAAKQNLLKQMGGAKGFDVNQLPDNLFEANAKQKVETSLILDSIMNLQEFKAEEAEVESLLDELVQAYEEPEKTKEQIKKNDKEIANLKALVIENKLTDWVLEQAKVTEKTEDFFEVIKENMQAQQAGF</sequence>